<dbReference type="EMBL" id="AABR07058587">
    <property type="status" value="NOT_ANNOTATED_CDS"/>
    <property type="molecule type" value="Genomic_DNA"/>
</dbReference>
<dbReference type="EMBL" id="CH473950">
    <property type="protein sequence ID" value="EDM15587.1"/>
    <property type="molecule type" value="Genomic_DNA"/>
</dbReference>
<dbReference type="EMBL" id="BC079434">
    <property type="protein sequence ID" value="AAH79434.1"/>
    <property type="status" value="ALT_INIT"/>
    <property type="molecule type" value="mRNA"/>
</dbReference>
<dbReference type="RefSeq" id="NP_001013971.2">
    <property type="nucleotide sequence ID" value="NM_001013949.1"/>
</dbReference>
<dbReference type="SMR" id="Q6AXN9"/>
<dbReference type="FunCoup" id="Q6AXN9">
    <property type="interactions" value="47"/>
</dbReference>
<dbReference type="IntAct" id="Q6AXN9">
    <property type="interactions" value="1"/>
</dbReference>
<dbReference type="STRING" id="10116.ENSRNOP00000041528"/>
<dbReference type="CarbonylDB" id="Q6AXN9"/>
<dbReference type="PhosphoSitePlus" id="Q6AXN9"/>
<dbReference type="PaxDb" id="10116-ENSRNOP00000041528"/>
<dbReference type="Ensembl" id="ENSRNOT00000042412.6">
    <property type="protein sequence ID" value="ENSRNOP00000041528.4"/>
    <property type="gene ID" value="ENSRNOG00000033502.6"/>
</dbReference>
<dbReference type="GeneID" id="300122"/>
<dbReference type="KEGG" id="rno:300122"/>
<dbReference type="AGR" id="RGD:1309033"/>
<dbReference type="CTD" id="26150"/>
<dbReference type="RGD" id="1309033">
    <property type="gene designation" value="Ribc2"/>
</dbReference>
<dbReference type="eggNOG" id="ENOG502QWST">
    <property type="taxonomic scope" value="Eukaryota"/>
</dbReference>
<dbReference type="GeneTree" id="ENSGT00390000010825"/>
<dbReference type="HOGENOM" id="CLU_061822_0_1_1"/>
<dbReference type="InParanoid" id="Q6AXN9"/>
<dbReference type="OMA" id="NLCRAIN"/>
<dbReference type="OrthoDB" id="429119at2759"/>
<dbReference type="PhylomeDB" id="Q6AXN9"/>
<dbReference type="TreeFam" id="TF324120"/>
<dbReference type="PRO" id="PR:Q6AXN9"/>
<dbReference type="Proteomes" id="UP000002494">
    <property type="component" value="Chromosome 7"/>
</dbReference>
<dbReference type="Proteomes" id="UP000234681">
    <property type="component" value="Chromosome 7"/>
</dbReference>
<dbReference type="Bgee" id="ENSRNOG00000033502">
    <property type="expression patterns" value="Expressed in testis and 2 other cell types or tissues"/>
</dbReference>
<dbReference type="GO" id="GO:0160111">
    <property type="term" value="C:axonemal A tubule inner sheath"/>
    <property type="evidence" value="ECO:0000250"/>
    <property type="project" value="UniProtKB"/>
</dbReference>
<dbReference type="GO" id="GO:0005879">
    <property type="term" value="C:axonemal microtubule"/>
    <property type="evidence" value="ECO:0000250"/>
    <property type="project" value="UniProtKB"/>
</dbReference>
<dbReference type="GO" id="GO:0036126">
    <property type="term" value="C:sperm flagellum"/>
    <property type="evidence" value="ECO:0000250"/>
    <property type="project" value="UniProtKB"/>
</dbReference>
<dbReference type="GO" id="GO:0030317">
    <property type="term" value="P:flagellated sperm motility"/>
    <property type="evidence" value="ECO:0000250"/>
    <property type="project" value="UniProtKB"/>
</dbReference>
<dbReference type="InterPro" id="IPR008805">
    <property type="entry name" value="RIB43A"/>
</dbReference>
<dbReference type="PANTHER" id="PTHR14517:SF10">
    <property type="entry name" value="RIB43A-LIKE WITH COILED-COILS PROTEIN 2"/>
    <property type="match status" value="1"/>
</dbReference>
<dbReference type="PANTHER" id="PTHR14517">
    <property type="entry name" value="RIB43A-RELATED"/>
    <property type="match status" value="1"/>
</dbReference>
<dbReference type="Pfam" id="PF05914">
    <property type="entry name" value="RIB43A"/>
    <property type="match status" value="1"/>
</dbReference>
<organism>
    <name type="scientific">Rattus norvegicus</name>
    <name type="common">Rat</name>
    <dbReference type="NCBI Taxonomy" id="10116"/>
    <lineage>
        <taxon>Eukaryota</taxon>
        <taxon>Metazoa</taxon>
        <taxon>Chordata</taxon>
        <taxon>Craniata</taxon>
        <taxon>Vertebrata</taxon>
        <taxon>Euteleostomi</taxon>
        <taxon>Mammalia</taxon>
        <taxon>Eutheria</taxon>
        <taxon>Euarchontoglires</taxon>
        <taxon>Glires</taxon>
        <taxon>Rodentia</taxon>
        <taxon>Myomorpha</taxon>
        <taxon>Muroidea</taxon>
        <taxon>Muridae</taxon>
        <taxon>Murinae</taxon>
        <taxon>Rattus</taxon>
    </lineage>
</organism>
<accession>Q6AXN9</accession>
<accession>R9PXY2</accession>
<proteinExistence type="evidence at transcript level"/>
<protein>
    <recommendedName>
        <fullName evidence="5">RIB43A-like with coiled-coils protein 2</fullName>
    </recommendedName>
</protein>
<gene>
    <name evidence="6" type="primary">Ribc2</name>
</gene>
<keyword id="KW-0966">Cell projection</keyword>
<keyword id="KW-0969">Cilium</keyword>
<keyword id="KW-0175">Coiled coil</keyword>
<keyword id="KW-0963">Cytoplasm</keyword>
<keyword id="KW-0206">Cytoskeleton</keyword>
<keyword id="KW-0282">Flagellum</keyword>
<keyword id="KW-1185">Reference proteome</keyword>
<sequence length="377" mass="45134">MEVAIPKDLQQEASLAKKRYMDLCRQGQIFDARNRIIGGDTQAWDVQVRNQKIKEVTEKARDETFAAEMRHNDKVMCIMHDRELRHRKQLCRAINDFQQRFQKPETRREFDLSDPLALKKELPARVSDNDMRNTISGMQKFMGEDLNFQERKRIQKEQNREWSLQQHGEWERAQAEHKLAEHLHTQTELKFDEAARDLQRLEITTRKAVCAAVKEFNKKQVVELAERKRQVKQQEQEDNMSEITNLLHGDLLSENPQQAASNFGPRHVMLDRWKGMNREQLEEIWSTWKQQIHEKLRLQEEERQHNMDWDLRRTRKAHASLLQERQQQRLLREQRRALDCSNLSLAKQQYLQKRQLDAAPSSQPTEDYFSQFNTRSR</sequence>
<name>RIBC2_RAT</name>
<comment type="function">
    <text evidence="2">Microtubule inner protein (MIP) part of the dynein-decorated doublet microtubules (DMTs) in cilia axoneme, which is required for motile cilia beating.</text>
</comment>
<comment type="subunit">
    <text evidence="2">Microtubule inner protein component of sperm flagellar doublet microtubules.</text>
</comment>
<comment type="subcellular location">
    <subcellularLocation>
        <location evidence="1">Cytoplasm</location>
        <location evidence="1">Cytoskeleton</location>
        <location evidence="1">Cilium axoneme</location>
    </subcellularLocation>
    <subcellularLocation>
        <location evidence="2">Cytoplasm</location>
        <location evidence="2">Cytoskeleton</location>
        <location evidence="2">Flagellum axoneme</location>
    </subcellularLocation>
</comment>
<comment type="similarity">
    <text evidence="5">Belongs to the RIB43A family.</text>
</comment>
<comment type="sequence caution" evidence="5">
    <conflict type="erroneous initiation">
        <sequence resource="EMBL-CDS" id="AAH79434"/>
    </conflict>
    <text>Truncated N-terminus.</text>
</comment>
<feature type="chain" id="PRO_0000254100" description="RIB43A-like with coiled-coils protein 2">
    <location>
        <begin position="1"/>
        <end position="377"/>
    </location>
</feature>
<feature type="region of interest" description="Disordered" evidence="4">
    <location>
        <begin position="355"/>
        <end position="377"/>
    </location>
</feature>
<feature type="coiled-coil region" evidence="3">
    <location>
        <begin position="188"/>
        <end position="238"/>
    </location>
</feature>
<feature type="compositionally biased region" description="Polar residues" evidence="4">
    <location>
        <begin position="360"/>
        <end position="377"/>
    </location>
</feature>
<reference key="1">
    <citation type="journal article" date="2004" name="Nature">
        <title>Genome sequence of the Brown Norway rat yields insights into mammalian evolution.</title>
        <authorList>
            <person name="Gibbs R.A."/>
            <person name="Weinstock G.M."/>
            <person name="Metzker M.L."/>
            <person name="Muzny D.M."/>
            <person name="Sodergren E.J."/>
            <person name="Scherer S."/>
            <person name="Scott G."/>
            <person name="Steffen D."/>
            <person name="Worley K.C."/>
            <person name="Burch P.E."/>
            <person name="Okwuonu G."/>
            <person name="Hines S."/>
            <person name="Lewis L."/>
            <person name="Deramo C."/>
            <person name="Delgado O."/>
            <person name="Dugan-Rocha S."/>
            <person name="Miner G."/>
            <person name="Morgan M."/>
            <person name="Hawes A."/>
            <person name="Gill R."/>
            <person name="Holt R.A."/>
            <person name="Adams M.D."/>
            <person name="Amanatides P.G."/>
            <person name="Baden-Tillson H."/>
            <person name="Barnstead M."/>
            <person name="Chin S."/>
            <person name="Evans C.A."/>
            <person name="Ferriera S."/>
            <person name="Fosler C."/>
            <person name="Glodek A."/>
            <person name="Gu Z."/>
            <person name="Jennings D."/>
            <person name="Kraft C.L."/>
            <person name="Nguyen T."/>
            <person name="Pfannkoch C.M."/>
            <person name="Sitter C."/>
            <person name="Sutton G.G."/>
            <person name="Venter J.C."/>
            <person name="Woodage T."/>
            <person name="Smith D."/>
            <person name="Lee H.-M."/>
            <person name="Gustafson E."/>
            <person name="Cahill P."/>
            <person name="Kana A."/>
            <person name="Doucette-Stamm L."/>
            <person name="Weinstock K."/>
            <person name="Fechtel K."/>
            <person name="Weiss R.B."/>
            <person name="Dunn D.M."/>
            <person name="Green E.D."/>
            <person name="Blakesley R.W."/>
            <person name="Bouffard G.G."/>
            <person name="De Jong P.J."/>
            <person name="Osoegawa K."/>
            <person name="Zhu B."/>
            <person name="Marra M."/>
            <person name="Schein J."/>
            <person name="Bosdet I."/>
            <person name="Fjell C."/>
            <person name="Jones S."/>
            <person name="Krzywinski M."/>
            <person name="Mathewson C."/>
            <person name="Siddiqui A."/>
            <person name="Wye N."/>
            <person name="McPherson J."/>
            <person name="Zhao S."/>
            <person name="Fraser C.M."/>
            <person name="Shetty J."/>
            <person name="Shatsman S."/>
            <person name="Geer K."/>
            <person name="Chen Y."/>
            <person name="Abramzon S."/>
            <person name="Nierman W.C."/>
            <person name="Havlak P.H."/>
            <person name="Chen R."/>
            <person name="Durbin K.J."/>
            <person name="Egan A."/>
            <person name="Ren Y."/>
            <person name="Song X.-Z."/>
            <person name="Li B."/>
            <person name="Liu Y."/>
            <person name="Qin X."/>
            <person name="Cawley S."/>
            <person name="Cooney A.J."/>
            <person name="D'Souza L.M."/>
            <person name="Martin K."/>
            <person name="Wu J.Q."/>
            <person name="Gonzalez-Garay M.L."/>
            <person name="Jackson A.R."/>
            <person name="Kalafus K.J."/>
            <person name="McLeod M.P."/>
            <person name="Milosavljevic A."/>
            <person name="Virk D."/>
            <person name="Volkov A."/>
            <person name="Wheeler D.A."/>
            <person name="Zhang Z."/>
            <person name="Bailey J.A."/>
            <person name="Eichler E.E."/>
            <person name="Tuzun E."/>
            <person name="Birney E."/>
            <person name="Mongin E."/>
            <person name="Ureta-Vidal A."/>
            <person name="Woodwark C."/>
            <person name="Zdobnov E."/>
            <person name="Bork P."/>
            <person name="Suyama M."/>
            <person name="Torrents D."/>
            <person name="Alexandersson M."/>
            <person name="Trask B.J."/>
            <person name="Young J.M."/>
            <person name="Huang H."/>
            <person name="Wang H."/>
            <person name="Xing H."/>
            <person name="Daniels S."/>
            <person name="Gietzen D."/>
            <person name="Schmidt J."/>
            <person name="Stevens K."/>
            <person name="Vitt U."/>
            <person name="Wingrove J."/>
            <person name="Camara F."/>
            <person name="Mar Alba M."/>
            <person name="Abril J.F."/>
            <person name="Guigo R."/>
            <person name="Smit A."/>
            <person name="Dubchak I."/>
            <person name="Rubin E.M."/>
            <person name="Couronne O."/>
            <person name="Poliakov A."/>
            <person name="Huebner N."/>
            <person name="Ganten D."/>
            <person name="Goesele C."/>
            <person name="Hummel O."/>
            <person name="Kreitler T."/>
            <person name="Lee Y.-A."/>
            <person name="Monti J."/>
            <person name="Schulz H."/>
            <person name="Zimdahl H."/>
            <person name="Himmelbauer H."/>
            <person name="Lehrach H."/>
            <person name="Jacob H.J."/>
            <person name="Bromberg S."/>
            <person name="Gullings-Handley J."/>
            <person name="Jensen-Seaman M.I."/>
            <person name="Kwitek A.E."/>
            <person name="Lazar J."/>
            <person name="Pasko D."/>
            <person name="Tonellato P.J."/>
            <person name="Twigger S."/>
            <person name="Ponting C.P."/>
            <person name="Duarte J.M."/>
            <person name="Rice S."/>
            <person name="Goodstadt L."/>
            <person name="Beatson S.A."/>
            <person name="Emes R.D."/>
            <person name="Winter E.E."/>
            <person name="Webber C."/>
            <person name="Brandt P."/>
            <person name="Nyakatura G."/>
            <person name="Adetobi M."/>
            <person name="Chiaromonte F."/>
            <person name="Elnitski L."/>
            <person name="Eswara P."/>
            <person name="Hardison R.C."/>
            <person name="Hou M."/>
            <person name="Kolbe D."/>
            <person name="Makova K."/>
            <person name="Miller W."/>
            <person name="Nekrutenko A."/>
            <person name="Riemer C."/>
            <person name="Schwartz S."/>
            <person name="Taylor J."/>
            <person name="Yang S."/>
            <person name="Zhang Y."/>
            <person name="Lindpaintner K."/>
            <person name="Andrews T.D."/>
            <person name="Caccamo M."/>
            <person name="Clamp M."/>
            <person name="Clarke L."/>
            <person name="Curwen V."/>
            <person name="Durbin R.M."/>
            <person name="Eyras E."/>
            <person name="Searle S.M."/>
            <person name="Cooper G.M."/>
            <person name="Batzoglou S."/>
            <person name="Brudno M."/>
            <person name="Sidow A."/>
            <person name="Stone E.A."/>
            <person name="Payseur B.A."/>
            <person name="Bourque G."/>
            <person name="Lopez-Otin C."/>
            <person name="Puente X.S."/>
            <person name="Chakrabarti K."/>
            <person name="Chatterji S."/>
            <person name="Dewey C."/>
            <person name="Pachter L."/>
            <person name="Bray N."/>
            <person name="Yap V.B."/>
            <person name="Caspi A."/>
            <person name="Tesler G."/>
            <person name="Pevzner P.A."/>
            <person name="Haussler D."/>
            <person name="Roskin K.M."/>
            <person name="Baertsch R."/>
            <person name="Clawson H."/>
            <person name="Furey T.S."/>
            <person name="Hinrichs A.S."/>
            <person name="Karolchik D."/>
            <person name="Kent W.J."/>
            <person name="Rosenbloom K.R."/>
            <person name="Trumbower H."/>
            <person name="Weirauch M."/>
            <person name="Cooper D.N."/>
            <person name="Stenson P.D."/>
            <person name="Ma B."/>
            <person name="Brent M."/>
            <person name="Arumugam M."/>
            <person name="Shteynberg D."/>
            <person name="Copley R.R."/>
            <person name="Taylor M.S."/>
            <person name="Riethman H."/>
            <person name="Mudunuri U."/>
            <person name="Peterson J."/>
            <person name="Guyer M."/>
            <person name="Felsenfeld A."/>
            <person name="Old S."/>
            <person name="Mockrin S."/>
            <person name="Collins F.S."/>
        </authorList>
    </citation>
    <scope>NUCLEOTIDE SEQUENCE [LARGE SCALE GENOMIC DNA]</scope>
    <source>
        <strain>Brown Norway</strain>
    </source>
</reference>
<reference key="2">
    <citation type="submission" date="2005-09" db="EMBL/GenBank/DDBJ databases">
        <authorList>
            <person name="Mural R.J."/>
            <person name="Adams M.D."/>
            <person name="Myers E.W."/>
            <person name="Smith H.O."/>
            <person name="Venter J.C."/>
        </authorList>
    </citation>
    <scope>NUCLEOTIDE SEQUENCE [LARGE SCALE GENOMIC DNA]</scope>
    <source>
        <strain>Brown Norway</strain>
    </source>
</reference>
<reference key="3">
    <citation type="journal article" date="2004" name="Genome Res.">
        <title>The status, quality, and expansion of the NIH full-length cDNA project: the Mammalian Gene Collection (MGC).</title>
        <authorList>
            <consortium name="The MGC Project Team"/>
        </authorList>
    </citation>
    <scope>NUCLEOTIDE SEQUENCE [LARGE SCALE MRNA]</scope>
    <source>
        <tissue>Testis</tissue>
    </source>
</reference>
<evidence type="ECO:0000250" key="1">
    <source>
        <dbReference type="UniProtKB" id="Q32LJ7"/>
    </source>
</evidence>
<evidence type="ECO:0000250" key="2">
    <source>
        <dbReference type="UniProtKB" id="Q9D4Q1"/>
    </source>
</evidence>
<evidence type="ECO:0000255" key="3"/>
<evidence type="ECO:0000256" key="4">
    <source>
        <dbReference type="SAM" id="MobiDB-lite"/>
    </source>
</evidence>
<evidence type="ECO:0000305" key="5"/>
<evidence type="ECO:0000312" key="6">
    <source>
        <dbReference type="RGD" id="1309033"/>
    </source>
</evidence>